<proteinExistence type="inferred from homology"/>
<comment type="function">
    <text evidence="1">Catalyzes the reversible reaction in which hydroxymethyl group from 5,10-methylenetetrahydrofolate is transferred onto alpha-ketoisovalerate to form ketopantoate.</text>
</comment>
<comment type="catalytic activity">
    <reaction evidence="1">
        <text>3-methyl-2-oxobutanoate + (6R)-5,10-methylene-5,6,7,8-tetrahydrofolate + H2O = 2-dehydropantoate + (6S)-5,6,7,8-tetrahydrofolate</text>
        <dbReference type="Rhea" id="RHEA:11824"/>
        <dbReference type="ChEBI" id="CHEBI:11561"/>
        <dbReference type="ChEBI" id="CHEBI:11851"/>
        <dbReference type="ChEBI" id="CHEBI:15377"/>
        <dbReference type="ChEBI" id="CHEBI:15636"/>
        <dbReference type="ChEBI" id="CHEBI:57453"/>
        <dbReference type="EC" id="2.1.2.11"/>
    </reaction>
</comment>
<comment type="cofactor">
    <cofactor evidence="1">
        <name>Mg(2+)</name>
        <dbReference type="ChEBI" id="CHEBI:18420"/>
    </cofactor>
    <text evidence="1">Binds 1 Mg(2+) ion per subunit.</text>
</comment>
<comment type="pathway">
    <text evidence="1">Cofactor biosynthesis; (R)-pantothenate biosynthesis; (R)-pantoate from 3-methyl-2-oxobutanoate: step 1/2.</text>
</comment>
<comment type="subunit">
    <text evidence="1">Homodecamer; pentamer of dimers.</text>
</comment>
<comment type="subcellular location">
    <subcellularLocation>
        <location evidence="1">Cytoplasm</location>
    </subcellularLocation>
</comment>
<comment type="similarity">
    <text evidence="1">Belongs to the PanB family.</text>
</comment>
<reference key="1">
    <citation type="journal article" date="2009" name="BMC Genomics">
        <title>Pseudogene accumulation in the evolutionary histories of Salmonella enterica serovars Paratyphi A and Typhi.</title>
        <authorList>
            <person name="Holt K.E."/>
            <person name="Thomson N.R."/>
            <person name="Wain J."/>
            <person name="Langridge G.C."/>
            <person name="Hasan R."/>
            <person name="Bhutta Z.A."/>
            <person name="Quail M.A."/>
            <person name="Norbertczak H."/>
            <person name="Walker D."/>
            <person name="Simmonds M."/>
            <person name="White B."/>
            <person name="Bason N."/>
            <person name="Mungall K."/>
            <person name="Dougan G."/>
            <person name="Parkhill J."/>
        </authorList>
    </citation>
    <scope>NUCLEOTIDE SEQUENCE [LARGE SCALE GENOMIC DNA]</scope>
    <source>
        <strain>AKU_12601</strain>
    </source>
</reference>
<keyword id="KW-0963">Cytoplasm</keyword>
<keyword id="KW-0460">Magnesium</keyword>
<keyword id="KW-0479">Metal-binding</keyword>
<keyword id="KW-0566">Pantothenate biosynthesis</keyword>
<keyword id="KW-0808">Transferase</keyword>
<sequence length="263" mass="28105">MKPTTISLLQKCKQEKKRFATITAYDYSFAKLFADEGINVMLVGDSLGMTIQGHDSTLPVTVEDIAYHTRAVRRGAPNCLLLSDLPFMAYATPEQACENAAIVMRAGANMVKIEGGAWLVDTVKMLTERAVPVCGHLGLTPQSVNIFGGYKIQGRGDAGQVLLDDALALEAAGAQLLVLECVPVELAKRVTEALSIPVIGIGAGNVTDGQILVMHDAFGITGGHIPKFAKNFLAEAGDMRAAVQQYMAEVESGVYPGEEHSFH</sequence>
<organism>
    <name type="scientific">Salmonella paratyphi A (strain AKU_12601)</name>
    <dbReference type="NCBI Taxonomy" id="554290"/>
    <lineage>
        <taxon>Bacteria</taxon>
        <taxon>Pseudomonadati</taxon>
        <taxon>Pseudomonadota</taxon>
        <taxon>Gammaproteobacteria</taxon>
        <taxon>Enterobacterales</taxon>
        <taxon>Enterobacteriaceae</taxon>
        <taxon>Salmonella</taxon>
    </lineage>
</organism>
<dbReference type="EC" id="2.1.2.11" evidence="1"/>
<dbReference type="EMBL" id="FM200053">
    <property type="protein sequence ID" value="CAR58295.1"/>
    <property type="molecule type" value="Genomic_DNA"/>
</dbReference>
<dbReference type="RefSeq" id="WP_000805487.1">
    <property type="nucleotide sequence ID" value="NC_011147.1"/>
</dbReference>
<dbReference type="SMR" id="B5BL65"/>
<dbReference type="KEGG" id="sek:SSPA0184"/>
<dbReference type="HOGENOM" id="CLU_036645_1_0_6"/>
<dbReference type="UniPathway" id="UPA00028">
    <property type="reaction ID" value="UER00003"/>
</dbReference>
<dbReference type="Proteomes" id="UP000001869">
    <property type="component" value="Chromosome"/>
</dbReference>
<dbReference type="GO" id="GO:0005737">
    <property type="term" value="C:cytoplasm"/>
    <property type="evidence" value="ECO:0007669"/>
    <property type="project" value="UniProtKB-SubCell"/>
</dbReference>
<dbReference type="GO" id="GO:0003864">
    <property type="term" value="F:3-methyl-2-oxobutanoate hydroxymethyltransferase activity"/>
    <property type="evidence" value="ECO:0007669"/>
    <property type="project" value="UniProtKB-UniRule"/>
</dbReference>
<dbReference type="GO" id="GO:0000287">
    <property type="term" value="F:magnesium ion binding"/>
    <property type="evidence" value="ECO:0007669"/>
    <property type="project" value="TreeGrafter"/>
</dbReference>
<dbReference type="GO" id="GO:0015940">
    <property type="term" value="P:pantothenate biosynthetic process"/>
    <property type="evidence" value="ECO:0007669"/>
    <property type="project" value="UniProtKB-UniRule"/>
</dbReference>
<dbReference type="CDD" id="cd06557">
    <property type="entry name" value="KPHMT-like"/>
    <property type="match status" value="1"/>
</dbReference>
<dbReference type="FunFam" id="3.20.20.60:FF:000003">
    <property type="entry name" value="3-methyl-2-oxobutanoate hydroxymethyltransferase"/>
    <property type="match status" value="1"/>
</dbReference>
<dbReference type="Gene3D" id="3.20.20.60">
    <property type="entry name" value="Phosphoenolpyruvate-binding domains"/>
    <property type="match status" value="1"/>
</dbReference>
<dbReference type="HAMAP" id="MF_00156">
    <property type="entry name" value="PanB"/>
    <property type="match status" value="1"/>
</dbReference>
<dbReference type="InterPro" id="IPR003700">
    <property type="entry name" value="Pantoate_hydroxy_MeTrfase"/>
</dbReference>
<dbReference type="InterPro" id="IPR015813">
    <property type="entry name" value="Pyrv/PenolPyrv_kinase-like_dom"/>
</dbReference>
<dbReference type="InterPro" id="IPR040442">
    <property type="entry name" value="Pyrv_kinase-like_dom_sf"/>
</dbReference>
<dbReference type="NCBIfam" id="TIGR00222">
    <property type="entry name" value="panB"/>
    <property type="match status" value="1"/>
</dbReference>
<dbReference type="NCBIfam" id="NF001452">
    <property type="entry name" value="PRK00311.1"/>
    <property type="match status" value="1"/>
</dbReference>
<dbReference type="PANTHER" id="PTHR20881">
    <property type="entry name" value="3-METHYL-2-OXOBUTANOATE HYDROXYMETHYLTRANSFERASE"/>
    <property type="match status" value="1"/>
</dbReference>
<dbReference type="PANTHER" id="PTHR20881:SF0">
    <property type="entry name" value="3-METHYL-2-OXOBUTANOATE HYDROXYMETHYLTRANSFERASE"/>
    <property type="match status" value="1"/>
</dbReference>
<dbReference type="Pfam" id="PF02548">
    <property type="entry name" value="Pantoate_transf"/>
    <property type="match status" value="1"/>
</dbReference>
<dbReference type="PIRSF" id="PIRSF000388">
    <property type="entry name" value="Pantoate_hydroxy_MeTrfase"/>
    <property type="match status" value="1"/>
</dbReference>
<dbReference type="SUPFAM" id="SSF51621">
    <property type="entry name" value="Phosphoenolpyruvate/pyruvate domain"/>
    <property type="match status" value="1"/>
</dbReference>
<evidence type="ECO:0000255" key="1">
    <source>
        <dbReference type="HAMAP-Rule" id="MF_00156"/>
    </source>
</evidence>
<gene>
    <name evidence="1" type="primary">panB</name>
    <name type="ordered locus">SSPA0184</name>
</gene>
<protein>
    <recommendedName>
        <fullName evidence="1">3-methyl-2-oxobutanoate hydroxymethyltransferase</fullName>
        <ecNumber evidence="1">2.1.2.11</ecNumber>
    </recommendedName>
    <alternativeName>
        <fullName evidence="1">Ketopantoate hydroxymethyltransferase</fullName>
        <shortName evidence="1">KPHMT</shortName>
    </alternativeName>
</protein>
<feature type="chain" id="PRO_1000097006" description="3-methyl-2-oxobutanoate hydroxymethyltransferase">
    <location>
        <begin position="1"/>
        <end position="263"/>
    </location>
</feature>
<feature type="active site" description="Proton acceptor" evidence="1">
    <location>
        <position position="180"/>
    </location>
</feature>
<feature type="binding site" evidence="1">
    <location>
        <begin position="45"/>
        <end position="46"/>
    </location>
    <ligand>
        <name>3-methyl-2-oxobutanoate</name>
        <dbReference type="ChEBI" id="CHEBI:11851"/>
    </ligand>
</feature>
<feature type="binding site" evidence="1">
    <location>
        <position position="45"/>
    </location>
    <ligand>
        <name>Mg(2+)</name>
        <dbReference type="ChEBI" id="CHEBI:18420"/>
    </ligand>
</feature>
<feature type="binding site" evidence="1">
    <location>
        <position position="84"/>
    </location>
    <ligand>
        <name>3-methyl-2-oxobutanoate</name>
        <dbReference type="ChEBI" id="CHEBI:11851"/>
    </ligand>
</feature>
<feature type="binding site" evidence="1">
    <location>
        <position position="84"/>
    </location>
    <ligand>
        <name>Mg(2+)</name>
        <dbReference type="ChEBI" id="CHEBI:18420"/>
    </ligand>
</feature>
<feature type="binding site" evidence="1">
    <location>
        <position position="112"/>
    </location>
    <ligand>
        <name>3-methyl-2-oxobutanoate</name>
        <dbReference type="ChEBI" id="CHEBI:11851"/>
    </ligand>
</feature>
<feature type="binding site" evidence="1">
    <location>
        <position position="114"/>
    </location>
    <ligand>
        <name>Mg(2+)</name>
        <dbReference type="ChEBI" id="CHEBI:18420"/>
    </ligand>
</feature>
<accession>B5BL65</accession>
<name>PANB_SALPK</name>